<protein>
    <recommendedName>
        <fullName evidence="1">Ribose-phosphate pyrophosphokinase</fullName>
        <shortName evidence="1">RPPK</shortName>
        <ecNumber evidence="1">2.7.6.1</ecNumber>
    </recommendedName>
    <alternativeName>
        <fullName evidence="1">5-phospho-D-ribosyl alpha-1-diphosphate synthase</fullName>
    </alternativeName>
    <alternativeName>
        <fullName evidence="1">Phosphoribosyl diphosphate synthase</fullName>
    </alternativeName>
    <alternativeName>
        <fullName evidence="1">Phosphoribosyl pyrophosphate synthase</fullName>
        <shortName evidence="1">P-Rib-PP synthase</shortName>
        <shortName evidence="1">PRPP synthase</shortName>
        <shortName evidence="1">PRPPase</shortName>
    </alternativeName>
</protein>
<name>KPRS_UREPA</name>
<dbReference type="EC" id="2.7.6.1" evidence="1"/>
<dbReference type="EMBL" id="AF222894">
    <property type="protein sequence ID" value="AAF30600.1"/>
    <property type="molecule type" value="Genomic_DNA"/>
</dbReference>
<dbReference type="RefSeq" id="WP_010891707.1">
    <property type="nucleotide sequence ID" value="NC_002162.1"/>
</dbReference>
<dbReference type="SMR" id="Q9PQV0"/>
<dbReference type="STRING" id="273119.UU193"/>
<dbReference type="EnsemblBacteria" id="AAF30600">
    <property type="protein sequence ID" value="AAF30600"/>
    <property type="gene ID" value="UU193"/>
</dbReference>
<dbReference type="GeneID" id="29672284"/>
<dbReference type="KEGG" id="uur:UU193"/>
<dbReference type="PATRIC" id="fig|273119.6.peg.200"/>
<dbReference type="eggNOG" id="COG0462">
    <property type="taxonomic scope" value="Bacteria"/>
</dbReference>
<dbReference type="HOGENOM" id="CLU_033546_2_0_14"/>
<dbReference type="OrthoDB" id="9777067at2"/>
<dbReference type="UniPathway" id="UPA00087">
    <property type="reaction ID" value="UER00172"/>
</dbReference>
<dbReference type="Proteomes" id="UP000000423">
    <property type="component" value="Chromosome"/>
</dbReference>
<dbReference type="GO" id="GO:0005737">
    <property type="term" value="C:cytoplasm"/>
    <property type="evidence" value="ECO:0007669"/>
    <property type="project" value="UniProtKB-SubCell"/>
</dbReference>
<dbReference type="GO" id="GO:0002189">
    <property type="term" value="C:ribose phosphate diphosphokinase complex"/>
    <property type="evidence" value="ECO:0007669"/>
    <property type="project" value="TreeGrafter"/>
</dbReference>
<dbReference type="GO" id="GO:0005524">
    <property type="term" value="F:ATP binding"/>
    <property type="evidence" value="ECO:0007669"/>
    <property type="project" value="UniProtKB-KW"/>
</dbReference>
<dbReference type="GO" id="GO:0016301">
    <property type="term" value="F:kinase activity"/>
    <property type="evidence" value="ECO:0007669"/>
    <property type="project" value="UniProtKB-KW"/>
</dbReference>
<dbReference type="GO" id="GO:0000287">
    <property type="term" value="F:magnesium ion binding"/>
    <property type="evidence" value="ECO:0007669"/>
    <property type="project" value="UniProtKB-UniRule"/>
</dbReference>
<dbReference type="GO" id="GO:0004749">
    <property type="term" value="F:ribose phosphate diphosphokinase activity"/>
    <property type="evidence" value="ECO:0007669"/>
    <property type="project" value="UniProtKB-UniRule"/>
</dbReference>
<dbReference type="GO" id="GO:0006015">
    <property type="term" value="P:5-phosphoribose 1-diphosphate biosynthetic process"/>
    <property type="evidence" value="ECO:0007669"/>
    <property type="project" value="UniProtKB-UniRule"/>
</dbReference>
<dbReference type="GO" id="GO:0006164">
    <property type="term" value="P:purine nucleotide biosynthetic process"/>
    <property type="evidence" value="ECO:0007669"/>
    <property type="project" value="TreeGrafter"/>
</dbReference>
<dbReference type="GO" id="GO:0009156">
    <property type="term" value="P:ribonucleoside monophosphate biosynthetic process"/>
    <property type="evidence" value="ECO:0007669"/>
    <property type="project" value="InterPro"/>
</dbReference>
<dbReference type="CDD" id="cd06223">
    <property type="entry name" value="PRTases_typeI"/>
    <property type="match status" value="1"/>
</dbReference>
<dbReference type="FunFam" id="3.40.50.2020:FF:000007">
    <property type="entry name" value="Ribose-phosphate pyrophosphokinase"/>
    <property type="match status" value="1"/>
</dbReference>
<dbReference type="Gene3D" id="3.40.50.2020">
    <property type="match status" value="2"/>
</dbReference>
<dbReference type="HAMAP" id="MF_00583_B">
    <property type="entry name" value="RibP_PPkinase_B"/>
    <property type="match status" value="1"/>
</dbReference>
<dbReference type="InterPro" id="IPR000842">
    <property type="entry name" value="PRib_PP_synth_CS"/>
</dbReference>
<dbReference type="InterPro" id="IPR029099">
    <property type="entry name" value="Pribosyltran_N"/>
</dbReference>
<dbReference type="InterPro" id="IPR000836">
    <property type="entry name" value="PRibTrfase_dom"/>
</dbReference>
<dbReference type="InterPro" id="IPR029057">
    <property type="entry name" value="PRTase-like"/>
</dbReference>
<dbReference type="InterPro" id="IPR005946">
    <property type="entry name" value="Rib-P_diPkinase"/>
</dbReference>
<dbReference type="InterPro" id="IPR037515">
    <property type="entry name" value="Rib-P_diPkinase_bac"/>
</dbReference>
<dbReference type="NCBIfam" id="NF002320">
    <property type="entry name" value="PRK01259.1"/>
    <property type="match status" value="1"/>
</dbReference>
<dbReference type="NCBIfam" id="TIGR01251">
    <property type="entry name" value="ribP_PPkin"/>
    <property type="match status" value="1"/>
</dbReference>
<dbReference type="PANTHER" id="PTHR10210">
    <property type="entry name" value="RIBOSE-PHOSPHATE DIPHOSPHOKINASE FAMILY MEMBER"/>
    <property type="match status" value="1"/>
</dbReference>
<dbReference type="PANTHER" id="PTHR10210:SF41">
    <property type="entry name" value="RIBOSE-PHOSPHATE PYROPHOSPHOKINASE 1, CHLOROPLASTIC"/>
    <property type="match status" value="1"/>
</dbReference>
<dbReference type="Pfam" id="PF00156">
    <property type="entry name" value="Pribosyltran"/>
    <property type="match status" value="1"/>
</dbReference>
<dbReference type="Pfam" id="PF13793">
    <property type="entry name" value="Pribosyltran_N"/>
    <property type="match status" value="1"/>
</dbReference>
<dbReference type="SMART" id="SM01400">
    <property type="entry name" value="Pribosyltran_N"/>
    <property type="match status" value="1"/>
</dbReference>
<dbReference type="SUPFAM" id="SSF53271">
    <property type="entry name" value="PRTase-like"/>
    <property type="match status" value="1"/>
</dbReference>
<dbReference type="PROSITE" id="PS00114">
    <property type="entry name" value="PRPP_SYNTHASE"/>
    <property type="match status" value="1"/>
</dbReference>
<accession>Q9PQV0</accession>
<gene>
    <name evidence="1" type="primary">prs</name>
    <name type="synonym">prsA</name>
    <name type="ordered locus">UU193</name>
</gene>
<comment type="function">
    <text evidence="1">Involved in the biosynthesis of the central metabolite phospho-alpha-D-ribosyl-1-pyrophosphate (PRPP) via the transfer of pyrophosphoryl group from ATP to 1-hydroxyl of ribose-5-phosphate (Rib-5-P).</text>
</comment>
<comment type="catalytic activity">
    <reaction evidence="1">
        <text>D-ribose 5-phosphate + ATP = 5-phospho-alpha-D-ribose 1-diphosphate + AMP + H(+)</text>
        <dbReference type="Rhea" id="RHEA:15609"/>
        <dbReference type="ChEBI" id="CHEBI:15378"/>
        <dbReference type="ChEBI" id="CHEBI:30616"/>
        <dbReference type="ChEBI" id="CHEBI:58017"/>
        <dbReference type="ChEBI" id="CHEBI:78346"/>
        <dbReference type="ChEBI" id="CHEBI:456215"/>
        <dbReference type="EC" id="2.7.6.1"/>
    </reaction>
</comment>
<comment type="cofactor">
    <cofactor evidence="1">
        <name>Mg(2+)</name>
        <dbReference type="ChEBI" id="CHEBI:18420"/>
    </cofactor>
    <text evidence="1">Binds 2 Mg(2+) ions per subunit.</text>
</comment>
<comment type="pathway">
    <text evidence="1">Metabolic intermediate biosynthesis; 5-phospho-alpha-D-ribose 1-diphosphate biosynthesis; 5-phospho-alpha-D-ribose 1-diphosphate from D-ribose 5-phosphate (route I): step 1/1.</text>
</comment>
<comment type="subunit">
    <text evidence="1">Homohexamer.</text>
</comment>
<comment type="subcellular location">
    <subcellularLocation>
        <location evidence="1">Cytoplasm</location>
    </subcellularLocation>
</comment>
<comment type="similarity">
    <text evidence="1">Belongs to the ribose-phosphate pyrophosphokinase family. Class I subfamily.</text>
</comment>
<sequence length="330" mass="36371">MSKNDDILLFSLSNSHQLANKIANLLKIELSPIRIDKFADGELIVAPQVPVRGRRVIIIQSTSKPVNDSLMELLIAIDSIKRASAKAISVVIPYYGYARQDRKAKPREPITARLVAKMIESAGATSVLTWDIHSLQTQGFFDIPFDSLEAVWVLMKHYFSAYKDSSNITIVSPDYGGVKRAREISIATGATLAIVDKRRSGKNQVEINNVLGDVKDRDCVIVDDMIDTGGTILGAAKIVREKGAKSITIIATHGLFNNNARQHFQQAIKDRIINKICIADTIENEPFDGLEIVSIAPAIAKCIEIYSEGTGSMSFVHDENSKVLFAKKIY</sequence>
<organism>
    <name type="scientific">Ureaplasma parvum serovar 3 (strain ATCC 700970)</name>
    <dbReference type="NCBI Taxonomy" id="273119"/>
    <lineage>
        <taxon>Bacteria</taxon>
        <taxon>Bacillati</taxon>
        <taxon>Mycoplasmatota</taxon>
        <taxon>Mycoplasmoidales</taxon>
        <taxon>Mycoplasmoidaceae</taxon>
        <taxon>Ureaplasma</taxon>
    </lineage>
</organism>
<reference key="1">
    <citation type="journal article" date="2000" name="Nature">
        <title>The complete sequence of the mucosal pathogen Ureaplasma urealyticum.</title>
        <authorList>
            <person name="Glass J.I."/>
            <person name="Lefkowitz E.J."/>
            <person name="Glass J.S."/>
            <person name="Heiner C.R."/>
            <person name="Chen E.Y."/>
            <person name="Cassell G.H."/>
        </authorList>
    </citation>
    <scope>NUCLEOTIDE SEQUENCE [LARGE SCALE GENOMIC DNA]</scope>
    <source>
        <strain>ATCC 700970</strain>
    </source>
</reference>
<proteinExistence type="inferred from homology"/>
<feature type="chain" id="PRO_0000141221" description="Ribose-phosphate pyrophosphokinase">
    <location>
        <begin position="1"/>
        <end position="330"/>
    </location>
</feature>
<feature type="active site" evidence="1">
    <location>
        <position position="197"/>
    </location>
</feature>
<feature type="binding site" evidence="1">
    <location>
        <begin position="40"/>
        <end position="42"/>
    </location>
    <ligand>
        <name>ATP</name>
        <dbReference type="ChEBI" id="CHEBI:30616"/>
    </ligand>
</feature>
<feature type="binding site" evidence="1">
    <location>
        <begin position="99"/>
        <end position="100"/>
    </location>
    <ligand>
        <name>ATP</name>
        <dbReference type="ChEBI" id="CHEBI:30616"/>
    </ligand>
</feature>
<feature type="binding site" evidence="1">
    <location>
        <position position="133"/>
    </location>
    <ligand>
        <name>Mg(2+)</name>
        <dbReference type="ChEBI" id="CHEBI:18420"/>
        <label>1</label>
    </ligand>
</feature>
<feature type="binding site" evidence="1">
    <location>
        <position position="174"/>
    </location>
    <ligand>
        <name>Mg(2+)</name>
        <dbReference type="ChEBI" id="CHEBI:18420"/>
        <label>2</label>
    </ligand>
</feature>
<feature type="binding site" evidence="1">
    <location>
        <position position="199"/>
    </location>
    <ligand>
        <name>D-ribose 5-phosphate</name>
        <dbReference type="ChEBI" id="CHEBI:78346"/>
    </ligand>
</feature>
<feature type="binding site" evidence="1">
    <location>
        <position position="223"/>
    </location>
    <ligand>
        <name>D-ribose 5-phosphate</name>
        <dbReference type="ChEBI" id="CHEBI:78346"/>
    </ligand>
</feature>
<feature type="binding site" evidence="1">
    <location>
        <begin position="227"/>
        <end position="231"/>
    </location>
    <ligand>
        <name>D-ribose 5-phosphate</name>
        <dbReference type="ChEBI" id="CHEBI:78346"/>
    </ligand>
</feature>
<keyword id="KW-0067">ATP-binding</keyword>
<keyword id="KW-0963">Cytoplasm</keyword>
<keyword id="KW-0418">Kinase</keyword>
<keyword id="KW-0460">Magnesium</keyword>
<keyword id="KW-0479">Metal-binding</keyword>
<keyword id="KW-0545">Nucleotide biosynthesis</keyword>
<keyword id="KW-0547">Nucleotide-binding</keyword>
<keyword id="KW-1185">Reference proteome</keyword>
<keyword id="KW-0808">Transferase</keyword>
<evidence type="ECO:0000255" key="1">
    <source>
        <dbReference type="HAMAP-Rule" id="MF_00583"/>
    </source>
</evidence>